<accession>Q6D412</accession>
<comment type="function">
    <text evidence="1">Catalyzes the condensation of ATP and 5-phosphoribose 1-diphosphate to form N'-(5'-phosphoribosyl)-ATP (PR-ATP). Has a crucial role in the pathway because the rate of histidine biosynthesis seems to be controlled primarily by regulation of HisG enzymatic activity.</text>
</comment>
<comment type="catalytic activity">
    <reaction evidence="1">
        <text>1-(5-phospho-beta-D-ribosyl)-ATP + diphosphate = 5-phospho-alpha-D-ribose 1-diphosphate + ATP</text>
        <dbReference type="Rhea" id="RHEA:18473"/>
        <dbReference type="ChEBI" id="CHEBI:30616"/>
        <dbReference type="ChEBI" id="CHEBI:33019"/>
        <dbReference type="ChEBI" id="CHEBI:58017"/>
        <dbReference type="ChEBI" id="CHEBI:73183"/>
        <dbReference type="EC" id="2.4.2.17"/>
    </reaction>
</comment>
<comment type="cofactor">
    <cofactor evidence="1">
        <name>Mg(2+)</name>
        <dbReference type="ChEBI" id="CHEBI:18420"/>
    </cofactor>
</comment>
<comment type="activity regulation">
    <text evidence="1">Feedback inhibited by histidine.</text>
</comment>
<comment type="pathway">
    <text evidence="1">Amino-acid biosynthesis; L-histidine biosynthesis; L-histidine from 5-phospho-alpha-D-ribose 1-diphosphate: step 1/9.</text>
</comment>
<comment type="subunit">
    <text evidence="1">Equilibrium between an active dimeric form, an inactive hexameric form and higher aggregates. Interconversion between the various forms is largely reversible and is influenced by the natural substrates and inhibitors of the enzyme.</text>
</comment>
<comment type="subcellular location">
    <subcellularLocation>
        <location evidence="1">Cytoplasm</location>
    </subcellularLocation>
</comment>
<comment type="similarity">
    <text evidence="1">Belongs to the ATP phosphoribosyltransferase family. Long subfamily.</text>
</comment>
<dbReference type="EC" id="2.4.2.17" evidence="1"/>
<dbReference type="EMBL" id="BX950851">
    <property type="protein sequence ID" value="CAG75481.1"/>
    <property type="molecule type" value="Genomic_DNA"/>
</dbReference>
<dbReference type="RefSeq" id="WP_011094127.1">
    <property type="nucleotide sequence ID" value="NC_004547.2"/>
</dbReference>
<dbReference type="SMR" id="Q6D412"/>
<dbReference type="STRING" id="218491.ECA2582"/>
<dbReference type="GeneID" id="57208722"/>
<dbReference type="KEGG" id="eca:ECA2582"/>
<dbReference type="PATRIC" id="fig|218491.5.peg.2616"/>
<dbReference type="eggNOG" id="COG0040">
    <property type="taxonomic scope" value="Bacteria"/>
</dbReference>
<dbReference type="HOGENOM" id="CLU_038115_1_0_6"/>
<dbReference type="OrthoDB" id="9801867at2"/>
<dbReference type="UniPathway" id="UPA00031">
    <property type="reaction ID" value="UER00006"/>
</dbReference>
<dbReference type="Proteomes" id="UP000007966">
    <property type="component" value="Chromosome"/>
</dbReference>
<dbReference type="GO" id="GO:0005737">
    <property type="term" value="C:cytoplasm"/>
    <property type="evidence" value="ECO:0007669"/>
    <property type="project" value="UniProtKB-SubCell"/>
</dbReference>
<dbReference type="GO" id="GO:0005524">
    <property type="term" value="F:ATP binding"/>
    <property type="evidence" value="ECO:0007669"/>
    <property type="project" value="UniProtKB-KW"/>
</dbReference>
<dbReference type="GO" id="GO:0003879">
    <property type="term" value="F:ATP phosphoribosyltransferase activity"/>
    <property type="evidence" value="ECO:0007669"/>
    <property type="project" value="UniProtKB-UniRule"/>
</dbReference>
<dbReference type="GO" id="GO:0000287">
    <property type="term" value="F:magnesium ion binding"/>
    <property type="evidence" value="ECO:0007669"/>
    <property type="project" value="UniProtKB-UniRule"/>
</dbReference>
<dbReference type="GO" id="GO:0000105">
    <property type="term" value="P:L-histidine biosynthetic process"/>
    <property type="evidence" value="ECO:0007669"/>
    <property type="project" value="UniProtKB-UniRule"/>
</dbReference>
<dbReference type="CDD" id="cd13592">
    <property type="entry name" value="PBP2_HisGL2"/>
    <property type="match status" value="1"/>
</dbReference>
<dbReference type="FunFam" id="3.30.70.120:FF:000002">
    <property type="entry name" value="ATP phosphoribosyltransferase"/>
    <property type="match status" value="1"/>
</dbReference>
<dbReference type="FunFam" id="3.40.190.10:FF:000008">
    <property type="entry name" value="ATP phosphoribosyltransferase"/>
    <property type="match status" value="1"/>
</dbReference>
<dbReference type="Gene3D" id="3.30.70.120">
    <property type="match status" value="1"/>
</dbReference>
<dbReference type="Gene3D" id="3.40.190.10">
    <property type="entry name" value="Periplasmic binding protein-like II"/>
    <property type="match status" value="2"/>
</dbReference>
<dbReference type="HAMAP" id="MF_00079">
    <property type="entry name" value="HisG_Long"/>
    <property type="match status" value="1"/>
</dbReference>
<dbReference type="InterPro" id="IPR020621">
    <property type="entry name" value="ATP-PRT_HisG_long"/>
</dbReference>
<dbReference type="InterPro" id="IPR013820">
    <property type="entry name" value="ATP_PRibTrfase_cat"/>
</dbReference>
<dbReference type="InterPro" id="IPR018198">
    <property type="entry name" value="ATP_PRibTrfase_CS"/>
</dbReference>
<dbReference type="InterPro" id="IPR001348">
    <property type="entry name" value="ATP_PRibTrfase_HisG"/>
</dbReference>
<dbReference type="InterPro" id="IPR013115">
    <property type="entry name" value="HisG_C"/>
</dbReference>
<dbReference type="InterPro" id="IPR011322">
    <property type="entry name" value="N-reg_PII-like_a/b"/>
</dbReference>
<dbReference type="InterPro" id="IPR015867">
    <property type="entry name" value="N-reg_PII/ATP_PRibTrfase_C"/>
</dbReference>
<dbReference type="NCBIfam" id="TIGR00070">
    <property type="entry name" value="hisG"/>
    <property type="match status" value="1"/>
</dbReference>
<dbReference type="NCBIfam" id="TIGR03455">
    <property type="entry name" value="HisG_C-term"/>
    <property type="match status" value="1"/>
</dbReference>
<dbReference type="PANTHER" id="PTHR21403:SF8">
    <property type="entry name" value="ATP PHOSPHORIBOSYLTRANSFERASE"/>
    <property type="match status" value="1"/>
</dbReference>
<dbReference type="PANTHER" id="PTHR21403">
    <property type="entry name" value="ATP PHOSPHORIBOSYLTRANSFERASE ATP-PRTASE"/>
    <property type="match status" value="1"/>
</dbReference>
<dbReference type="Pfam" id="PF01634">
    <property type="entry name" value="HisG"/>
    <property type="match status" value="1"/>
</dbReference>
<dbReference type="Pfam" id="PF08029">
    <property type="entry name" value="HisG_C"/>
    <property type="match status" value="1"/>
</dbReference>
<dbReference type="SUPFAM" id="SSF54913">
    <property type="entry name" value="GlnB-like"/>
    <property type="match status" value="1"/>
</dbReference>
<dbReference type="SUPFAM" id="SSF53850">
    <property type="entry name" value="Periplasmic binding protein-like II"/>
    <property type="match status" value="1"/>
</dbReference>
<dbReference type="PROSITE" id="PS01316">
    <property type="entry name" value="ATP_P_PHORIBOSYLTR"/>
    <property type="match status" value="1"/>
</dbReference>
<protein>
    <recommendedName>
        <fullName evidence="1">ATP phosphoribosyltransferase</fullName>
        <shortName evidence="1">ATP-PRT</shortName>
        <shortName evidence="1">ATP-PRTase</shortName>
        <ecNumber evidence="1">2.4.2.17</ecNumber>
    </recommendedName>
</protein>
<sequence>MLDKTRLRIAMQKSGRLSDDSRELLARCGIKINLQQQRLIAFAENMPIDILRVRDDDIPGLVMDGVVDLGIIGENVLEEELLNRRAQGEDPRYFTLRRLDFGGCRLSLAMQLDEAYTGPECLQNKRIATSYPHLLKQYLDRQSVNFKSCLLNGSVEVAPRAGLADAICDLVSTGATLEANGLREVEVIYRSKACLIQRDGEMPAEKQQLIDKLLTRMQGVIQARESKYIMLHAPSERLDEVIALLPGAERPTILPLAGDQSRVAMHMVSSETLFWETMEKLKSLGASSILVLPIEKMME</sequence>
<keyword id="KW-0028">Amino-acid biosynthesis</keyword>
<keyword id="KW-0067">ATP-binding</keyword>
<keyword id="KW-0963">Cytoplasm</keyword>
<keyword id="KW-0328">Glycosyltransferase</keyword>
<keyword id="KW-0368">Histidine biosynthesis</keyword>
<keyword id="KW-0460">Magnesium</keyword>
<keyword id="KW-0479">Metal-binding</keyword>
<keyword id="KW-0547">Nucleotide-binding</keyword>
<keyword id="KW-1185">Reference proteome</keyword>
<keyword id="KW-0808">Transferase</keyword>
<feature type="chain" id="PRO_1000004461" description="ATP phosphoribosyltransferase">
    <location>
        <begin position="1"/>
        <end position="299"/>
    </location>
</feature>
<organism>
    <name type="scientific">Pectobacterium atrosepticum (strain SCRI 1043 / ATCC BAA-672)</name>
    <name type="common">Erwinia carotovora subsp. atroseptica</name>
    <dbReference type="NCBI Taxonomy" id="218491"/>
    <lineage>
        <taxon>Bacteria</taxon>
        <taxon>Pseudomonadati</taxon>
        <taxon>Pseudomonadota</taxon>
        <taxon>Gammaproteobacteria</taxon>
        <taxon>Enterobacterales</taxon>
        <taxon>Pectobacteriaceae</taxon>
        <taxon>Pectobacterium</taxon>
    </lineage>
</organism>
<reference key="1">
    <citation type="journal article" date="2004" name="Proc. Natl. Acad. Sci. U.S.A.">
        <title>Genome sequence of the enterobacterial phytopathogen Erwinia carotovora subsp. atroseptica and characterization of virulence factors.</title>
        <authorList>
            <person name="Bell K.S."/>
            <person name="Sebaihia M."/>
            <person name="Pritchard L."/>
            <person name="Holden M.T.G."/>
            <person name="Hyman L.J."/>
            <person name="Holeva M.C."/>
            <person name="Thomson N.R."/>
            <person name="Bentley S.D."/>
            <person name="Churcher L.J.C."/>
            <person name="Mungall K."/>
            <person name="Atkin R."/>
            <person name="Bason N."/>
            <person name="Brooks K."/>
            <person name="Chillingworth T."/>
            <person name="Clark K."/>
            <person name="Doggett J."/>
            <person name="Fraser A."/>
            <person name="Hance Z."/>
            <person name="Hauser H."/>
            <person name="Jagels K."/>
            <person name="Moule S."/>
            <person name="Norbertczak H."/>
            <person name="Ormond D."/>
            <person name="Price C."/>
            <person name="Quail M.A."/>
            <person name="Sanders M."/>
            <person name="Walker D."/>
            <person name="Whitehead S."/>
            <person name="Salmond G.P.C."/>
            <person name="Birch P.R.J."/>
            <person name="Parkhill J."/>
            <person name="Toth I.K."/>
        </authorList>
    </citation>
    <scope>NUCLEOTIDE SEQUENCE [LARGE SCALE GENOMIC DNA]</scope>
    <source>
        <strain>SCRI 1043 / ATCC BAA-672</strain>
    </source>
</reference>
<name>HIS1_PECAS</name>
<evidence type="ECO:0000255" key="1">
    <source>
        <dbReference type="HAMAP-Rule" id="MF_00079"/>
    </source>
</evidence>
<proteinExistence type="inferred from homology"/>
<gene>
    <name evidence="1" type="primary">hisG</name>
    <name type="ordered locus">ECA2582</name>
</gene>